<comment type="function">
    <text>Protects virus-infected cells from TNF-induced cytolysis.</text>
</comment>
<comment type="similarity">
    <text evidence="1">Belongs to the adenoviridae E3_15 family.</text>
</comment>
<protein>
    <recommendedName>
        <fullName>Early E3 15.3 kDa protein</fullName>
    </recommendedName>
</protein>
<sequence>MTEILTTSNSAEDLLDMDGRVSEQRLAQLRIRQQQERVTKELRDVIQIHQCKKGIFCLVKQAKISYEITATDHRLSYELGPQRQKFTCMVGINPIVITQQSGDTKGCIHCSCDSIECTYTLLKTLCGLRDLLPMN</sequence>
<keyword id="KW-0244">Early protein</keyword>
<keyword id="KW-0945">Host-virus interaction</keyword>
<keyword id="KW-1085">Inhibition of host caspases by virus</keyword>
<keyword id="KW-1119">Modulation of host cell apoptosis by virus</keyword>
<name>E3145_ADE07</name>
<proteinExistence type="inferred from homology"/>
<accession>P15135</accession>
<evidence type="ECO:0000305" key="1"/>
<reference key="1">
    <citation type="journal article" date="1988" name="Virology">
        <title>Characterization of the early region 3 and fiber genes of Ad7.</title>
        <authorList>
            <person name="Hong J.S."/>
            <person name="Mullis K.G."/>
            <person name="Engler J.A."/>
        </authorList>
    </citation>
    <scope>NUCLEOTIDE SEQUENCE [GENOMIC DNA]</scope>
    <source>
        <strain>Gomen</strain>
    </source>
</reference>
<reference key="2">
    <citation type="journal article" date="1990" name="J. Virol.">
        <title>A protein serologically and functionally related to the group C E3 14,700-kilodalton protein is found in multiple adenovirus serotypes.</title>
        <authorList>
            <person name="Horton T.H."/>
            <person name="Tollefson A.E."/>
            <person name="Wold W.S.M."/>
            <person name="Gooding L.R."/>
        </authorList>
    </citation>
    <scope>IDENTIFICATION OF PROTEIN</scope>
</reference>
<organism>
    <name type="scientific">Human adenovirus B serotype 7</name>
    <name type="common">HAdV-7</name>
    <name type="synonym">Human adenovirus 7</name>
    <dbReference type="NCBI Taxonomy" id="10519"/>
    <lineage>
        <taxon>Viruses</taxon>
        <taxon>Varidnaviria</taxon>
        <taxon>Bamfordvirae</taxon>
        <taxon>Preplasmiviricota</taxon>
        <taxon>Tectiliviricetes</taxon>
        <taxon>Rowavirales</taxon>
        <taxon>Adenoviridae</taxon>
        <taxon>Mastadenovirus</taxon>
        <taxon>Human mastadenovirus B</taxon>
    </lineage>
</organism>
<feature type="chain" id="PRO_0000221749" description="Early E3 15.3 kDa protein">
    <location>
        <begin position="1"/>
        <end position="135"/>
    </location>
</feature>
<organismHost>
    <name type="scientific">Homo sapiens</name>
    <name type="common">Human</name>
    <dbReference type="NCBI Taxonomy" id="9606"/>
</organismHost>
<dbReference type="EMBL" id="M23696">
    <property type="protein sequence ID" value="AAA53253.1"/>
    <property type="molecule type" value="Genomic_DNA"/>
</dbReference>
<dbReference type="PIR" id="E31830">
    <property type="entry name" value="ERAD74"/>
</dbReference>
<dbReference type="GO" id="GO:0052031">
    <property type="term" value="P:symbiont-mediated perturbation of host defense response"/>
    <property type="evidence" value="ECO:0007669"/>
    <property type="project" value="InterPro"/>
</dbReference>
<dbReference type="GO" id="GO:0033668">
    <property type="term" value="P:symbiont-mediated suppression of host apoptosis"/>
    <property type="evidence" value="ECO:0007669"/>
    <property type="project" value="UniProtKB-KW"/>
</dbReference>
<dbReference type="InterPro" id="IPR004985">
    <property type="entry name" value="Adeno_E3-15"/>
</dbReference>
<dbReference type="Pfam" id="PF03307">
    <property type="entry name" value="Adeno_E3_15_3"/>
    <property type="match status" value="1"/>
</dbReference>